<keyword id="KW-0963">Cytoplasm</keyword>
<keyword id="KW-0489">Methyltransferase</keyword>
<keyword id="KW-1185">Reference proteome</keyword>
<keyword id="KW-0949">S-adenosyl-L-methionine</keyword>
<keyword id="KW-0808">Transferase</keyword>
<protein>
    <recommendedName>
        <fullName>Probable trans-aconitate 2-methyltransferase</fullName>
        <ecNumber evidence="1">2.1.1.144</ecNumber>
    </recommendedName>
</protein>
<evidence type="ECO:0000255" key="1">
    <source>
        <dbReference type="HAMAP-Rule" id="MF_00560"/>
    </source>
</evidence>
<proteinExistence type="inferred from homology"/>
<feature type="chain" id="PRO_0000218083" description="Probable trans-aconitate 2-methyltransferase">
    <location>
        <begin position="1"/>
        <end position="261"/>
    </location>
</feature>
<comment type="function">
    <text evidence="1">Catalyzes the S-adenosylmethionine monomethyl esterification of trans-aconitate.</text>
</comment>
<comment type="catalytic activity">
    <reaction evidence="1">
        <text>trans-aconitate + S-adenosyl-L-methionine = (E)-3-(methoxycarbonyl)pent-2-enedioate + S-adenosyl-L-homocysteine</text>
        <dbReference type="Rhea" id="RHEA:14969"/>
        <dbReference type="ChEBI" id="CHEBI:15708"/>
        <dbReference type="ChEBI" id="CHEBI:57470"/>
        <dbReference type="ChEBI" id="CHEBI:57856"/>
        <dbReference type="ChEBI" id="CHEBI:59789"/>
        <dbReference type="EC" id="2.1.1.144"/>
    </reaction>
</comment>
<comment type="subcellular location">
    <subcellularLocation>
        <location evidence="1">Cytoplasm</location>
    </subcellularLocation>
</comment>
<comment type="similarity">
    <text evidence="1">Belongs to the methyltransferase superfamily. Tam family.</text>
</comment>
<sequence>MWDPDVYLAFSGHRNRPFYELVSRVGLERARRVVDLGCGPGHLTRYLARRWPGAVIEALDSSPEMVAAAAERGIDATTGDLRDWKPKPDTDVVVSNAALHWVPEHSDLLVRWVDELAPGSWIAVQIPGNFETPSHAAVRALARREPYAKLMRDIPFRVGAVVQSPAYYAELLMDTGCKVDVWETTYLHQLTGEHPVLDWITGSALVPVRERLSDESWQQFRQELIPLLNDAYPPRADGSTIFPFRRLFMVAEVGGARRSGG</sequence>
<organism>
    <name type="scientific">Mycobacterium bovis (strain ATCC BAA-935 / AF2122/97)</name>
    <dbReference type="NCBI Taxonomy" id="233413"/>
    <lineage>
        <taxon>Bacteria</taxon>
        <taxon>Bacillati</taxon>
        <taxon>Actinomycetota</taxon>
        <taxon>Actinomycetes</taxon>
        <taxon>Mycobacteriales</taxon>
        <taxon>Mycobacteriaceae</taxon>
        <taxon>Mycobacterium</taxon>
        <taxon>Mycobacterium tuberculosis complex</taxon>
    </lineage>
</organism>
<name>TAM_MYCBO</name>
<reference key="1">
    <citation type="journal article" date="2003" name="Proc. Natl. Acad. Sci. U.S.A.">
        <title>The complete genome sequence of Mycobacterium bovis.</title>
        <authorList>
            <person name="Garnier T."/>
            <person name="Eiglmeier K."/>
            <person name="Camus J.-C."/>
            <person name="Medina N."/>
            <person name="Mansoor H."/>
            <person name="Pryor M."/>
            <person name="Duthoy S."/>
            <person name="Grondin S."/>
            <person name="Lacroix C."/>
            <person name="Monsempe C."/>
            <person name="Simon S."/>
            <person name="Harris B."/>
            <person name="Atkin R."/>
            <person name="Doggett J."/>
            <person name="Mayes R."/>
            <person name="Keating L."/>
            <person name="Wheeler P.R."/>
            <person name="Parkhill J."/>
            <person name="Barrell B.G."/>
            <person name="Cole S.T."/>
            <person name="Gordon S.V."/>
            <person name="Hewinson R.G."/>
        </authorList>
    </citation>
    <scope>NUCLEOTIDE SEQUENCE [LARGE SCALE GENOMIC DNA]</scope>
    <source>
        <strain>ATCC BAA-935 / AF2122/97</strain>
    </source>
</reference>
<reference key="2">
    <citation type="journal article" date="2017" name="Genome Announc.">
        <title>Updated reference genome sequence and annotation of Mycobacterium bovis AF2122/97.</title>
        <authorList>
            <person name="Malone K.M."/>
            <person name="Farrell D."/>
            <person name="Stuber T.P."/>
            <person name="Schubert O.T."/>
            <person name="Aebersold R."/>
            <person name="Robbe-Austerman S."/>
            <person name="Gordon S.V."/>
        </authorList>
    </citation>
    <scope>NUCLEOTIDE SEQUENCE [LARGE SCALE GENOMIC DNA]</scope>
    <scope>GENOME REANNOTATION</scope>
    <source>
        <strain>ATCC BAA-935 / AF2122/97</strain>
    </source>
</reference>
<dbReference type="EC" id="2.1.1.144" evidence="1"/>
<dbReference type="EMBL" id="LT708304">
    <property type="protein sequence ID" value="SIT98833.1"/>
    <property type="molecule type" value="Genomic_DNA"/>
</dbReference>
<dbReference type="RefSeq" id="NP_853966.1">
    <property type="nucleotide sequence ID" value="NC_002945.3"/>
</dbReference>
<dbReference type="RefSeq" id="WP_003401538.1">
    <property type="nucleotide sequence ID" value="NC_002945.4"/>
</dbReference>
<dbReference type="SMR" id="P66886"/>
<dbReference type="PATRIC" id="fig|233413.5.peg.330"/>
<dbReference type="Proteomes" id="UP000001419">
    <property type="component" value="Chromosome"/>
</dbReference>
<dbReference type="GO" id="GO:0005737">
    <property type="term" value="C:cytoplasm"/>
    <property type="evidence" value="ECO:0007669"/>
    <property type="project" value="UniProtKB-SubCell"/>
</dbReference>
<dbReference type="GO" id="GO:0030798">
    <property type="term" value="F:trans-aconitate 2-methyltransferase activity"/>
    <property type="evidence" value="ECO:0007669"/>
    <property type="project" value="UniProtKB-UniRule"/>
</dbReference>
<dbReference type="GO" id="GO:0032259">
    <property type="term" value="P:methylation"/>
    <property type="evidence" value="ECO:0007669"/>
    <property type="project" value="UniProtKB-KW"/>
</dbReference>
<dbReference type="CDD" id="cd02440">
    <property type="entry name" value="AdoMet_MTases"/>
    <property type="match status" value="1"/>
</dbReference>
<dbReference type="Gene3D" id="1.10.150.290">
    <property type="entry name" value="S-adenosyl-L-methionine-dependent methyltransferases"/>
    <property type="match status" value="1"/>
</dbReference>
<dbReference type="Gene3D" id="3.40.50.150">
    <property type="entry name" value="Vaccinia Virus protein VP39"/>
    <property type="match status" value="1"/>
</dbReference>
<dbReference type="HAMAP" id="MF_00560">
    <property type="entry name" value="Tran_acon_Me_trans"/>
    <property type="match status" value="1"/>
</dbReference>
<dbReference type="InterPro" id="IPR041698">
    <property type="entry name" value="Methyltransf_25"/>
</dbReference>
<dbReference type="InterPro" id="IPR029063">
    <property type="entry name" value="SAM-dependent_MTases_sf"/>
</dbReference>
<dbReference type="InterPro" id="IPR023506">
    <property type="entry name" value="Trans-aconitate_MeTrfase"/>
</dbReference>
<dbReference type="InterPro" id="IPR023149">
    <property type="entry name" value="Trans_acon_MeTrfase_C"/>
</dbReference>
<dbReference type="NCBIfam" id="NF010703">
    <property type="entry name" value="PRK14103.1"/>
    <property type="match status" value="1"/>
</dbReference>
<dbReference type="PANTHER" id="PTHR43861:SF1">
    <property type="entry name" value="TRANS-ACONITATE 2-METHYLTRANSFERASE"/>
    <property type="match status" value="1"/>
</dbReference>
<dbReference type="PANTHER" id="PTHR43861">
    <property type="entry name" value="TRANS-ACONITATE 2-METHYLTRANSFERASE-RELATED"/>
    <property type="match status" value="1"/>
</dbReference>
<dbReference type="Pfam" id="PF13649">
    <property type="entry name" value="Methyltransf_25"/>
    <property type="match status" value="1"/>
</dbReference>
<dbReference type="SUPFAM" id="SSF53335">
    <property type="entry name" value="S-adenosyl-L-methionine-dependent methyltransferases"/>
    <property type="match status" value="1"/>
</dbReference>
<accession>P66886</accession>
<accession>A0A1R3XUX1</accession>
<accession>O53698</accession>
<accession>X2BEL6</accession>
<gene>
    <name evidence="1" type="primary">tam</name>
    <name type="ordered locus">BQ2027_MB0302</name>
</gene>